<gene>
    <name evidence="5" type="primary">LCC1</name>
</gene>
<organism>
    <name type="scientific">Trametes villosa</name>
    <name type="common">White-rot fungus</name>
    <dbReference type="NCBI Taxonomy" id="47662"/>
    <lineage>
        <taxon>Eukaryota</taxon>
        <taxon>Fungi</taxon>
        <taxon>Dikarya</taxon>
        <taxon>Basidiomycota</taxon>
        <taxon>Agaricomycotina</taxon>
        <taxon>Agaricomycetes</taxon>
        <taxon>Polyporales</taxon>
        <taxon>Polyporaceae</taxon>
        <taxon>Trametes</taxon>
    </lineage>
</organism>
<comment type="function">
    <text evidence="2">Lignin degradation and detoxification of lignin-derived products.</text>
</comment>
<comment type="catalytic activity">
    <reaction evidence="2">
        <text>4 hydroquinone + O2 = 4 benzosemiquinone + 2 H2O</text>
        <dbReference type="Rhea" id="RHEA:11276"/>
        <dbReference type="ChEBI" id="CHEBI:15377"/>
        <dbReference type="ChEBI" id="CHEBI:15379"/>
        <dbReference type="ChEBI" id="CHEBI:17594"/>
        <dbReference type="ChEBI" id="CHEBI:17977"/>
        <dbReference type="EC" id="1.10.3.2"/>
    </reaction>
</comment>
<comment type="cofactor">
    <cofactor evidence="2">
        <name>Cu cation</name>
        <dbReference type="ChEBI" id="CHEBI:23378"/>
    </cofactor>
    <text evidence="2">Binds 4 Cu cations per monomer.</text>
</comment>
<comment type="subunit">
    <text evidence="4">Homodimer.</text>
</comment>
<comment type="subcellular location">
    <subcellularLocation>
        <location evidence="2">Secreted</location>
    </subcellularLocation>
</comment>
<comment type="similarity">
    <text evidence="6">Belongs to the multicopper oxidase family.</text>
</comment>
<keyword id="KW-0186">Copper</keyword>
<keyword id="KW-1015">Disulfide bond</keyword>
<keyword id="KW-0325">Glycoprotein</keyword>
<keyword id="KW-0439">Lignin degradation</keyword>
<keyword id="KW-0479">Metal-binding</keyword>
<keyword id="KW-0560">Oxidoreductase</keyword>
<keyword id="KW-0677">Repeat</keyword>
<keyword id="KW-0964">Secreted</keyword>
<keyword id="KW-0732">Signal</keyword>
<sequence>MSRFHSLLAFVVASLTAVAHAGIGPVADLTITNAAVSPDGFSRQAVVVNGGTPGPLITGNMGDRFQLNVIDNLTNHTMVKSTSIHWHGFFQKGTNWADGPAFINQCPISSGHSFLYDFQVPDQAGTFWYHSHLSTQYCDGLRGPFVVYDPNDPAADLYDVDNDDTVITLVDWYHVAAKLGPAFPLGADATLINGKGRSPSTTTADLSVISVTPGKRYRFRLVSLSCDPNYTFSIDGHNMTIIETDSINTAPLVVDSIQIFAAQRYSFVLEANQAVDNYWIRANPNFGNVGFTGGINSAILRYDGAAAVEPTTTQTTSTAPLNEVNLHPLVTTAVPGSPVAGGVDLAINMAFNFNGTNFFINGTSFTPPTVPVLLQIISGAQNAQDLLPSGSVYSLPSNADIEISFPATAAAPGAPHPFHLHGHAFAVVRSAGSTVYNYDNPIFRDVVSTGTPAAGDNVTIRFRTDNPGPWFLHCHIDFHLEAGFAVVFAEDIPDVASANPVPQAWSDLCPTYDALDPSDQ</sequence>
<reference key="1">
    <citation type="journal article" date="1996" name="Appl. Environ. Microbiol.">
        <title>Purification, characterization, molecular cloning, and expression of two laccase genes from the white rot basidiomycete Trametes villosa.</title>
        <authorList>
            <person name="Yaver D.S."/>
            <person name="Xu F."/>
            <person name="Golightly E.J."/>
            <person name="Brown K.M."/>
            <person name="Brown S.H."/>
            <person name="Rey M.W."/>
            <person name="Schneider P."/>
            <person name="Halkier T."/>
            <person name="Mondorf K."/>
            <person name="Dalboge H."/>
        </authorList>
    </citation>
    <scope>NUCLEOTIDE SEQUENCE [GENOMIC DNA]</scope>
    <scope>SUBUNIT</scope>
    <source>
        <tissue>Mycelium</tissue>
    </source>
</reference>
<protein>
    <recommendedName>
        <fullName evidence="5">Laccase-1</fullName>
        <ecNumber evidence="2">1.10.3.2</ecNumber>
    </recommendedName>
    <alternativeName>
        <fullName>Benzenediol:oxygen oxidoreductase 1</fullName>
    </alternativeName>
    <alternativeName>
        <fullName>Diphenol oxidase 1</fullName>
    </alternativeName>
    <alternativeName>
        <fullName>Urishiol oxidase 1</fullName>
    </alternativeName>
</protein>
<feature type="signal peptide" evidence="3">
    <location>
        <begin position="1"/>
        <end position="21"/>
    </location>
</feature>
<feature type="chain" id="PRO_0000002943" description="Laccase-1">
    <location>
        <begin position="22"/>
        <end position="520"/>
    </location>
</feature>
<feature type="domain" description="Plastocyanin-like 1">
    <location>
        <begin position="23"/>
        <end position="148"/>
    </location>
</feature>
<feature type="domain" description="Plastocyanin-like 2">
    <location>
        <begin position="160"/>
        <end position="302"/>
    </location>
</feature>
<feature type="domain" description="Plastocyanin-like 3">
    <location>
        <begin position="369"/>
        <end position="491"/>
    </location>
</feature>
<feature type="binding site" description="type 2 copper site" evidence="1">
    <location>
        <position position="85"/>
    </location>
    <ligand>
        <name>Cu cation</name>
        <dbReference type="ChEBI" id="CHEBI:23378"/>
        <label>1</label>
    </ligand>
</feature>
<feature type="binding site" description="type 3 copper site" evidence="1">
    <location>
        <position position="87"/>
    </location>
    <ligand>
        <name>Cu cation</name>
        <dbReference type="ChEBI" id="CHEBI:23378"/>
        <label>2</label>
    </ligand>
</feature>
<feature type="binding site" description="type 3 copper site" evidence="1">
    <location>
        <position position="130"/>
    </location>
    <ligand>
        <name>Cu cation</name>
        <dbReference type="ChEBI" id="CHEBI:23378"/>
        <label>2</label>
    </ligand>
</feature>
<feature type="binding site" description="type 3 copper site" evidence="1">
    <location>
        <position position="132"/>
    </location>
    <ligand>
        <name>Cu cation</name>
        <dbReference type="ChEBI" id="CHEBI:23378"/>
        <label>3</label>
    </ligand>
</feature>
<feature type="binding site" description="type 1 copper site" evidence="1">
    <location>
        <position position="416"/>
    </location>
    <ligand>
        <name>Cu cation</name>
        <dbReference type="ChEBI" id="CHEBI:23378"/>
        <label>4</label>
    </ligand>
</feature>
<feature type="binding site" description="type 2 copper site" evidence="1">
    <location>
        <position position="419"/>
    </location>
    <ligand>
        <name>Cu cation</name>
        <dbReference type="ChEBI" id="CHEBI:23378"/>
        <label>1</label>
    </ligand>
</feature>
<feature type="binding site" description="type 3 copper site" evidence="1">
    <location>
        <position position="421"/>
    </location>
    <ligand>
        <name>Cu cation</name>
        <dbReference type="ChEBI" id="CHEBI:23378"/>
        <label>3</label>
    </ligand>
</feature>
<feature type="binding site" description="type 3 copper site" evidence="1">
    <location>
        <position position="473"/>
    </location>
    <ligand>
        <name>Cu cation</name>
        <dbReference type="ChEBI" id="CHEBI:23378"/>
        <label>3</label>
    </ligand>
</feature>
<feature type="binding site" description="type 1 copper site" evidence="1">
    <location>
        <position position="474"/>
    </location>
    <ligand>
        <name>Cu cation</name>
        <dbReference type="ChEBI" id="CHEBI:23378"/>
        <label>4</label>
    </ligand>
</feature>
<feature type="binding site" description="type 3 copper site" evidence="1">
    <location>
        <position position="475"/>
    </location>
    <ligand>
        <name>Cu cation</name>
        <dbReference type="ChEBI" id="CHEBI:23378"/>
        <label>2</label>
    </ligand>
</feature>
<feature type="binding site" description="type 1 copper site" evidence="1">
    <location>
        <position position="479"/>
    </location>
    <ligand>
        <name>Cu cation</name>
        <dbReference type="ChEBI" id="CHEBI:23378"/>
        <label>4</label>
    </ligand>
</feature>
<feature type="glycosylation site" description="N-linked (GlcNAc...) asparagine" evidence="3">
    <location>
        <position position="72"/>
    </location>
</feature>
<feature type="glycosylation site" description="N-linked (GlcNAc...) asparagine" evidence="3">
    <location>
        <position position="75"/>
    </location>
</feature>
<feature type="glycosylation site" description="N-linked (GlcNAc...) asparagine" evidence="3">
    <location>
        <position position="229"/>
    </location>
</feature>
<feature type="glycosylation site" description="N-linked (GlcNAc...) asparagine" evidence="3">
    <location>
        <position position="238"/>
    </location>
</feature>
<feature type="glycosylation site" description="N-linked (GlcNAc...) asparagine" evidence="3">
    <location>
        <position position="354"/>
    </location>
</feature>
<feature type="glycosylation site" description="N-linked (GlcNAc...) asparagine" evidence="3">
    <location>
        <position position="361"/>
    </location>
</feature>
<feature type="disulfide bond" evidence="2">
    <location>
        <begin position="106"/>
        <end position="509"/>
    </location>
</feature>
<feature type="disulfide bond" evidence="1">
    <location>
        <begin position="138"/>
        <end position="226"/>
    </location>
</feature>
<name>LAC1_TRAVI</name>
<evidence type="ECO:0000250" key="1">
    <source>
        <dbReference type="UniProtKB" id="D0VWU3"/>
    </source>
</evidence>
<evidence type="ECO:0000250" key="2">
    <source>
        <dbReference type="UniProtKB" id="Q70KY3"/>
    </source>
</evidence>
<evidence type="ECO:0000255" key="3"/>
<evidence type="ECO:0000269" key="4">
    <source>
    </source>
</evidence>
<evidence type="ECO:0000303" key="5">
    <source>
    </source>
</evidence>
<evidence type="ECO:0000305" key="6"/>
<accession>Q99044</accession>
<proteinExistence type="evidence at protein level"/>
<dbReference type="EC" id="1.10.3.2" evidence="2"/>
<dbReference type="EMBL" id="L49376">
    <property type="protein sequence ID" value="AAC41686.1"/>
    <property type="molecule type" value="Genomic_DNA"/>
</dbReference>
<dbReference type="SMR" id="Q99044"/>
<dbReference type="CAZy" id="AA1">
    <property type="family name" value="Auxiliary Activities 1"/>
</dbReference>
<dbReference type="GlyCosmos" id="Q99044">
    <property type="glycosylation" value="6 sites, No reported glycans"/>
</dbReference>
<dbReference type="GO" id="GO:0005576">
    <property type="term" value="C:extracellular region"/>
    <property type="evidence" value="ECO:0007669"/>
    <property type="project" value="UniProtKB-SubCell"/>
</dbReference>
<dbReference type="GO" id="GO:0005507">
    <property type="term" value="F:copper ion binding"/>
    <property type="evidence" value="ECO:0007669"/>
    <property type="project" value="InterPro"/>
</dbReference>
<dbReference type="GO" id="GO:0052716">
    <property type="term" value="F:hydroquinone:oxygen oxidoreductase activity"/>
    <property type="evidence" value="ECO:0007669"/>
    <property type="project" value="UniProtKB-EC"/>
</dbReference>
<dbReference type="GO" id="GO:0046274">
    <property type="term" value="P:lignin catabolic process"/>
    <property type="evidence" value="ECO:0007669"/>
    <property type="project" value="UniProtKB-KW"/>
</dbReference>
<dbReference type="CDD" id="cd13856">
    <property type="entry name" value="CuRO_1_Tv-LCC_like"/>
    <property type="match status" value="1"/>
</dbReference>
<dbReference type="CDD" id="cd13903">
    <property type="entry name" value="CuRO_3_Tv-LCC_like"/>
    <property type="match status" value="1"/>
</dbReference>
<dbReference type="FunFam" id="2.60.40.420:FF:000045">
    <property type="entry name" value="Laccase 2"/>
    <property type="match status" value="1"/>
</dbReference>
<dbReference type="FunFam" id="2.60.40.420:FF:000125">
    <property type="entry name" value="Laccase 2"/>
    <property type="match status" value="1"/>
</dbReference>
<dbReference type="FunFam" id="2.60.40.420:FF:000112">
    <property type="entry name" value="Laccase B"/>
    <property type="match status" value="1"/>
</dbReference>
<dbReference type="Gene3D" id="2.60.40.420">
    <property type="entry name" value="Cupredoxins - blue copper proteins"/>
    <property type="match status" value="3"/>
</dbReference>
<dbReference type="InterPro" id="IPR011707">
    <property type="entry name" value="Cu-oxidase-like_N"/>
</dbReference>
<dbReference type="InterPro" id="IPR001117">
    <property type="entry name" value="Cu-oxidase_2nd"/>
</dbReference>
<dbReference type="InterPro" id="IPR011706">
    <property type="entry name" value="Cu-oxidase_C"/>
</dbReference>
<dbReference type="InterPro" id="IPR045087">
    <property type="entry name" value="Cu-oxidase_fam"/>
</dbReference>
<dbReference type="InterPro" id="IPR033138">
    <property type="entry name" value="Cu_oxidase_CS"/>
</dbReference>
<dbReference type="InterPro" id="IPR008972">
    <property type="entry name" value="Cupredoxin"/>
</dbReference>
<dbReference type="PANTHER" id="PTHR11709:SF394">
    <property type="entry name" value="FI03373P-RELATED"/>
    <property type="match status" value="1"/>
</dbReference>
<dbReference type="PANTHER" id="PTHR11709">
    <property type="entry name" value="MULTI-COPPER OXIDASE"/>
    <property type="match status" value="1"/>
</dbReference>
<dbReference type="Pfam" id="PF00394">
    <property type="entry name" value="Cu-oxidase"/>
    <property type="match status" value="1"/>
</dbReference>
<dbReference type="Pfam" id="PF07731">
    <property type="entry name" value="Cu-oxidase_2"/>
    <property type="match status" value="1"/>
</dbReference>
<dbReference type="Pfam" id="PF07732">
    <property type="entry name" value="Cu-oxidase_3"/>
    <property type="match status" value="1"/>
</dbReference>
<dbReference type="SUPFAM" id="SSF49503">
    <property type="entry name" value="Cupredoxins"/>
    <property type="match status" value="3"/>
</dbReference>
<dbReference type="PROSITE" id="PS00079">
    <property type="entry name" value="MULTICOPPER_OXIDASE1"/>
    <property type="match status" value="1"/>
</dbReference>